<protein>
    <recommendedName>
        <fullName evidence="8">(13S,14R)-13-O-acetyl-1-hydroxy-N-methylcanadine 8-hydroxylase CYP82X1</fullName>
        <ecNumber evidence="4 5">1.14.14.167</ecNumber>
    </recommendedName>
    <alternativeName>
        <fullName evidence="7">Cytochrome P450 82X1</fullName>
    </alternativeName>
</protein>
<keyword id="KW-0017">Alkaloid metabolism</keyword>
<keyword id="KW-0349">Heme</keyword>
<keyword id="KW-0408">Iron</keyword>
<keyword id="KW-0472">Membrane</keyword>
<keyword id="KW-0479">Metal-binding</keyword>
<keyword id="KW-0503">Monooxygenase</keyword>
<keyword id="KW-0560">Oxidoreductase</keyword>
<keyword id="KW-0812">Transmembrane</keyword>
<keyword id="KW-1133">Transmembrane helix</keyword>
<evidence type="ECO:0000250" key="1">
    <source>
        <dbReference type="UniProtKB" id="Q96242"/>
    </source>
</evidence>
<evidence type="ECO:0000255" key="2"/>
<evidence type="ECO:0000269" key="3">
    <source>
    </source>
</evidence>
<evidence type="ECO:0000269" key="4">
    <source>
    </source>
</evidence>
<evidence type="ECO:0000269" key="5">
    <source>
    </source>
</evidence>
<evidence type="ECO:0000269" key="6">
    <source>
    </source>
</evidence>
<evidence type="ECO:0000303" key="7">
    <source>
    </source>
</evidence>
<evidence type="ECO:0000305" key="8"/>
<evidence type="ECO:0000305" key="9">
    <source>
    </source>
</evidence>
<name>C82X1_PAPSO</name>
<accession>I3V6B7</accession>
<sequence>MELFIKLPFIQPIPFSIILVTTVSIVLLYSVFFWVTDKKKKRKKAPNAAGAWPLIGHLRLLMNDKEPLYRALGSMADKYGPAFNIRLGNQEVLVVSNWEMVKQCFGNQNDKLFSNRQTTLAAKYMLNQTTSSGFAPYGPYWRELRKIMVQQLLSKQSLESWKHLKIKEMDASFSKLNELCNNNGTGTATLIRMDEWFAELTFNVIARNVFGYQSGGRSTALTNGDTESKGERYKKTLEEALHLMSIFAVSDIFPSLEWVDRLRGLIRNMKRFGDELNSIAGCLIEEHRQKRLQSVSKSDKGVGDEQDFVDVLLSVAEKSQLPGDDPDLVIKSMILEIVSGGSETTSSTLTWALCLLLNHPHVLKKAKEELDTHVGKDRHVEESDTPKLVYINAIIKESMRLYPNGAMLDRLALEECEVGGFHVPAGGRLFVNVWKIQRDPSVWENPLEFKPERWFLSNGEKMDVDYKGHNHEFIPFGIGRRMCAGMLWASEVIHLVLPRLIHGFDMKAASANGKVDMAEMAGMVICFKKTPLEVMVNPRE</sequence>
<gene>
    <name evidence="7" type="primary">CYP82X1</name>
</gene>
<feature type="chain" id="PRO_0000447596" description="(13S,14R)-13-O-acetyl-1-hydroxy-N-methylcanadine 8-hydroxylase CYP82X1">
    <location>
        <begin position="1"/>
        <end position="540"/>
    </location>
</feature>
<feature type="transmembrane region" description="Helical" evidence="2">
    <location>
        <begin position="15"/>
        <end position="35"/>
    </location>
</feature>
<feature type="binding site" description="axial binding residue" evidence="1">
    <location>
        <position position="483"/>
    </location>
    <ligand>
        <name>heme</name>
        <dbReference type="ChEBI" id="CHEBI:30413"/>
    </ligand>
    <ligandPart>
        <name>Fe</name>
        <dbReference type="ChEBI" id="CHEBI:18248"/>
    </ligandPart>
</feature>
<reference key="1">
    <citation type="journal article" date="2012" name="Plant Mol. Biol.">
        <title>Integration of deep transcript and targeted metabolite profiles for eight cultivars of opium poppy.</title>
        <authorList>
            <person name="Desgagne-Penix I."/>
            <person name="Farrow S.C."/>
            <person name="Cram D."/>
            <person name="Nowak J."/>
            <person name="Facchini P.J."/>
        </authorList>
    </citation>
    <scope>NUCLEOTIDE SEQUENCE [MRNA]</scope>
</reference>
<reference key="2">
    <citation type="journal article" date="2012" name="Science">
        <title>A Papaver somniferum 10-gene cluster for synthesis of the anticancer alkaloid noscapine.</title>
        <authorList>
            <person name="Winzer T."/>
            <person name="Gazda V."/>
            <person name="He Z."/>
            <person name="Kaminski F."/>
            <person name="Kern M."/>
            <person name="Larson T.R."/>
            <person name="Li Y."/>
            <person name="Meade F."/>
            <person name="Teodor R."/>
            <person name="Vaistij F.E."/>
            <person name="Walker C."/>
            <person name="Bowser T.A."/>
            <person name="Graham I.A."/>
        </authorList>
    </citation>
    <scope>NUCLEOTIDE SEQUENCE [GENOMIC DNA]</scope>
    <scope>TISSUE SPECIFICITY</scope>
</reference>
<reference key="3">
    <citation type="journal article" date="2015" name="Nat. Chem. Biol.">
        <title>Acetylation serves as a protective group in noscapine biosynthesis in opium poppy.</title>
        <authorList>
            <person name="Dang T.T."/>
            <person name="Chen X."/>
            <person name="Facchini P.J."/>
        </authorList>
    </citation>
    <scope>FUNCTION</scope>
    <scope>CATALYTIC ACTIVITY</scope>
    <scope>BIOPHYSICOCHEMICAL PROPERTIES</scope>
</reference>
<reference key="4">
    <citation type="journal article" date="2016" name="Nat. Commun.">
        <title>Engineering biosynthesis of the anticancer alkaloid noscapine in yeast.</title>
        <authorList>
            <person name="Li Y."/>
            <person name="Smolke C.D."/>
        </authorList>
    </citation>
    <scope>FUNCTION</scope>
    <scope>CATALYTIC ACTIVITY</scope>
</reference>
<reference key="5">
    <citation type="journal article" date="2018" name="Proc. Natl. Acad. Sci. U.S.A.">
        <title>Complete biosynthesis of noscapine and halogenated alkaloids in yeast.</title>
        <authorList>
            <person name="Li Y."/>
            <person name="Li S."/>
            <person name="Thodey K."/>
            <person name="Trenchard I."/>
            <person name="Cravens A."/>
            <person name="Smolke C.D."/>
        </authorList>
    </citation>
    <scope>FUNCTION</scope>
</reference>
<organism>
    <name type="scientific">Papaver somniferum</name>
    <name type="common">Opium poppy</name>
    <dbReference type="NCBI Taxonomy" id="3469"/>
    <lineage>
        <taxon>Eukaryota</taxon>
        <taxon>Viridiplantae</taxon>
        <taxon>Streptophyta</taxon>
        <taxon>Embryophyta</taxon>
        <taxon>Tracheophyta</taxon>
        <taxon>Spermatophyta</taxon>
        <taxon>Magnoliopsida</taxon>
        <taxon>Ranunculales</taxon>
        <taxon>Papaveraceae</taxon>
        <taxon>Papaveroideae</taxon>
        <taxon>Papaver</taxon>
    </lineage>
</organism>
<proteinExistence type="evidence at protein level"/>
<comment type="function">
    <text evidence="4 5 6">Cytochrome P450 involved in the biosynthesis of the benzylisoquinoline alkaloid noscapine (PubMed:25485687, PubMed:27378283, PubMed:29610307). Converts (13S,14R)-13-O-acetyl-1-hydroxy-N-methylcanadine to (13S,14R)-13-O-acetyl-1,8-dihydroxy-N-methylcanadine (PubMed:25485687, PubMed:27378283).</text>
</comment>
<comment type="catalytic activity">
    <reaction evidence="4 5">
        <text>(13S,14R)-13-O-acetyl-1-hydroxy-N-methylcanadine + reduced [NADPH--hemoprotein reductase] + O2 = (13S,14R)-13-O-acetyl-1,8-dihydroxy-N-methylcanadine + oxidized [NADPH--hemoprotein reductase] + H2O + H(+)</text>
        <dbReference type="Rhea" id="RHEA:57388"/>
        <dbReference type="Rhea" id="RHEA-COMP:11964"/>
        <dbReference type="Rhea" id="RHEA-COMP:11965"/>
        <dbReference type="ChEBI" id="CHEBI:15377"/>
        <dbReference type="ChEBI" id="CHEBI:15378"/>
        <dbReference type="ChEBI" id="CHEBI:15379"/>
        <dbReference type="ChEBI" id="CHEBI:57618"/>
        <dbReference type="ChEBI" id="CHEBI:58210"/>
        <dbReference type="ChEBI" id="CHEBI:141640"/>
        <dbReference type="ChEBI" id="CHEBI:141642"/>
        <dbReference type="EC" id="1.14.14.167"/>
    </reaction>
    <physiologicalReaction direction="left-to-right" evidence="9">
        <dbReference type="Rhea" id="RHEA:57389"/>
    </physiologicalReaction>
</comment>
<comment type="cofactor">
    <cofactor evidence="1">
        <name>heme</name>
        <dbReference type="ChEBI" id="CHEBI:30413"/>
    </cofactor>
</comment>
<comment type="biophysicochemical properties">
    <kinetics>
        <KM evidence="4">4.9 uM for (13S,14R)-13-O-acetyl-1-hydroxy-N-methylcanadine</KM>
        <Vmax evidence="4">54.5 nmol/min/mg enzyme with (13S,14R)-13-O-acetyl-1-hydroxy-N-methylcanadine as substrate</Vmax>
    </kinetics>
</comment>
<comment type="pathway">
    <text evidence="8">Alkaloid biosynthesis.</text>
</comment>
<comment type="subcellular location">
    <subcellularLocation>
        <location evidence="2">Membrane</location>
        <topology evidence="2">Single-pass membrane protein</topology>
    </subcellularLocation>
</comment>
<comment type="tissue specificity">
    <text evidence="3">Highly expressed in capsules (PubMed:22653730). Expressed is stems (PubMed:22653730).</text>
</comment>
<comment type="similarity">
    <text evidence="8">Belongs to the cytochrome P450 family.</text>
</comment>
<dbReference type="EC" id="1.14.14.167" evidence="4 5"/>
<dbReference type="EMBL" id="JN185333">
    <property type="protein sequence ID" value="AFK73719.1"/>
    <property type="molecule type" value="mRNA"/>
</dbReference>
<dbReference type="EMBL" id="JQ659002">
    <property type="protein sequence ID" value="AFB74614.1"/>
    <property type="molecule type" value="Genomic_DNA"/>
</dbReference>
<dbReference type="SMR" id="I3V6B7"/>
<dbReference type="EnsemblPlants" id="RZC84729">
    <property type="protein sequence ID" value="RZC84729"/>
    <property type="gene ID" value="C5167_047516"/>
</dbReference>
<dbReference type="Gramene" id="RZC84729">
    <property type="protein sequence ID" value="RZC84729"/>
    <property type="gene ID" value="C5167_047516"/>
</dbReference>
<dbReference type="KEGG" id="ag:AFB74614"/>
<dbReference type="OMA" id="WASEVIH"/>
<dbReference type="OrthoDB" id="1904580at2759"/>
<dbReference type="BioCyc" id="MetaCyc:MONOMER-20625"/>
<dbReference type="BRENDA" id="1.14.14.167">
    <property type="organism ID" value="4515"/>
</dbReference>
<dbReference type="SABIO-RK" id="I3V6B7"/>
<dbReference type="GO" id="GO:0016020">
    <property type="term" value="C:membrane"/>
    <property type="evidence" value="ECO:0007669"/>
    <property type="project" value="UniProtKB-SubCell"/>
</dbReference>
<dbReference type="GO" id="GO:0020037">
    <property type="term" value="F:heme binding"/>
    <property type="evidence" value="ECO:0007669"/>
    <property type="project" value="InterPro"/>
</dbReference>
<dbReference type="GO" id="GO:0005506">
    <property type="term" value="F:iron ion binding"/>
    <property type="evidence" value="ECO:0007669"/>
    <property type="project" value="InterPro"/>
</dbReference>
<dbReference type="GO" id="GO:0004497">
    <property type="term" value="F:monooxygenase activity"/>
    <property type="evidence" value="ECO:0007669"/>
    <property type="project" value="UniProtKB-KW"/>
</dbReference>
<dbReference type="GO" id="GO:0016705">
    <property type="term" value="F:oxidoreductase activity, acting on paired donors, with incorporation or reduction of molecular oxygen"/>
    <property type="evidence" value="ECO:0007669"/>
    <property type="project" value="InterPro"/>
</dbReference>
<dbReference type="GO" id="GO:0033075">
    <property type="term" value="P:isoquinoline alkaloid biosynthetic process"/>
    <property type="evidence" value="ECO:0007669"/>
    <property type="project" value="UniProtKB-ARBA"/>
</dbReference>
<dbReference type="CDD" id="cd20654">
    <property type="entry name" value="CYP82"/>
    <property type="match status" value="1"/>
</dbReference>
<dbReference type="FunFam" id="1.10.630.10:FF:000026">
    <property type="entry name" value="Cytochrome P450 82C4"/>
    <property type="match status" value="1"/>
</dbReference>
<dbReference type="Gene3D" id="1.10.630.10">
    <property type="entry name" value="Cytochrome P450"/>
    <property type="match status" value="1"/>
</dbReference>
<dbReference type="InterPro" id="IPR001128">
    <property type="entry name" value="Cyt_P450"/>
</dbReference>
<dbReference type="InterPro" id="IPR017972">
    <property type="entry name" value="Cyt_P450_CS"/>
</dbReference>
<dbReference type="InterPro" id="IPR002401">
    <property type="entry name" value="Cyt_P450_E_grp-I"/>
</dbReference>
<dbReference type="InterPro" id="IPR036396">
    <property type="entry name" value="Cyt_P450_sf"/>
</dbReference>
<dbReference type="InterPro" id="IPR050651">
    <property type="entry name" value="Plant_Cytochrome_P450_Monoox"/>
</dbReference>
<dbReference type="PANTHER" id="PTHR47947:SF26">
    <property type="entry name" value="CYTOCHROME P450"/>
    <property type="match status" value="1"/>
</dbReference>
<dbReference type="PANTHER" id="PTHR47947">
    <property type="entry name" value="CYTOCHROME P450 82C3-RELATED"/>
    <property type="match status" value="1"/>
</dbReference>
<dbReference type="Pfam" id="PF00067">
    <property type="entry name" value="p450"/>
    <property type="match status" value="1"/>
</dbReference>
<dbReference type="PRINTS" id="PR00463">
    <property type="entry name" value="EP450I"/>
</dbReference>
<dbReference type="PRINTS" id="PR00385">
    <property type="entry name" value="P450"/>
</dbReference>
<dbReference type="SUPFAM" id="SSF48264">
    <property type="entry name" value="Cytochrome P450"/>
    <property type="match status" value="1"/>
</dbReference>
<dbReference type="PROSITE" id="PS00086">
    <property type="entry name" value="CYTOCHROME_P450"/>
    <property type="match status" value="1"/>
</dbReference>